<protein>
    <recommendedName>
        <fullName evidence="1">Sugar fermentation stimulation protein homolog</fullName>
    </recommendedName>
</protein>
<gene>
    <name evidence="1" type="primary">sfsA</name>
    <name type="ordered locus">CC_2675</name>
</gene>
<dbReference type="EMBL" id="AE005673">
    <property type="protein sequence ID" value="AAK24642.1"/>
    <property type="molecule type" value="Genomic_DNA"/>
</dbReference>
<dbReference type="PIR" id="F87580">
    <property type="entry name" value="F87580"/>
</dbReference>
<dbReference type="RefSeq" id="NP_421474.1">
    <property type="nucleotide sequence ID" value="NC_002696.2"/>
</dbReference>
<dbReference type="RefSeq" id="WP_010920525.1">
    <property type="nucleotide sequence ID" value="NC_002696.2"/>
</dbReference>
<dbReference type="SMR" id="Q9A4Z6"/>
<dbReference type="STRING" id="190650.CC_2675"/>
<dbReference type="EnsemblBacteria" id="AAK24642">
    <property type="protein sequence ID" value="AAK24642"/>
    <property type="gene ID" value="CC_2675"/>
</dbReference>
<dbReference type="KEGG" id="ccr:CC_2675"/>
<dbReference type="PATRIC" id="fig|190650.5.peg.2686"/>
<dbReference type="eggNOG" id="COG1489">
    <property type="taxonomic scope" value="Bacteria"/>
</dbReference>
<dbReference type="HOGENOM" id="CLU_052299_2_0_5"/>
<dbReference type="BioCyc" id="CAULO:CC2675-MONOMER"/>
<dbReference type="Proteomes" id="UP000001816">
    <property type="component" value="Chromosome"/>
</dbReference>
<dbReference type="GO" id="GO:0003677">
    <property type="term" value="F:DNA binding"/>
    <property type="evidence" value="ECO:0007669"/>
    <property type="project" value="InterPro"/>
</dbReference>
<dbReference type="CDD" id="cd22359">
    <property type="entry name" value="SfsA-like_bacterial"/>
    <property type="match status" value="1"/>
</dbReference>
<dbReference type="Gene3D" id="2.40.50.580">
    <property type="match status" value="1"/>
</dbReference>
<dbReference type="Gene3D" id="3.40.1350.60">
    <property type="match status" value="1"/>
</dbReference>
<dbReference type="HAMAP" id="MF_00095">
    <property type="entry name" value="SfsA"/>
    <property type="match status" value="1"/>
</dbReference>
<dbReference type="InterPro" id="IPR005224">
    <property type="entry name" value="SfsA"/>
</dbReference>
<dbReference type="InterPro" id="IPR040452">
    <property type="entry name" value="SfsA_C"/>
</dbReference>
<dbReference type="InterPro" id="IPR041465">
    <property type="entry name" value="SfsA_N"/>
</dbReference>
<dbReference type="NCBIfam" id="TIGR00230">
    <property type="entry name" value="sfsA"/>
    <property type="match status" value="1"/>
</dbReference>
<dbReference type="PANTHER" id="PTHR30545">
    <property type="entry name" value="SUGAR FERMENTATION STIMULATION PROTEIN A"/>
    <property type="match status" value="1"/>
</dbReference>
<dbReference type="PANTHER" id="PTHR30545:SF2">
    <property type="entry name" value="SUGAR FERMENTATION STIMULATION PROTEIN A"/>
    <property type="match status" value="1"/>
</dbReference>
<dbReference type="Pfam" id="PF03749">
    <property type="entry name" value="SfsA"/>
    <property type="match status" value="1"/>
</dbReference>
<dbReference type="Pfam" id="PF17746">
    <property type="entry name" value="SfsA_N"/>
    <property type="match status" value="1"/>
</dbReference>
<keyword id="KW-1185">Reference proteome</keyword>
<evidence type="ECO:0000255" key="1">
    <source>
        <dbReference type="HAMAP-Rule" id="MF_00095"/>
    </source>
</evidence>
<organism>
    <name type="scientific">Caulobacter vibrioides (strain ATCC 19089 / CIP 103742 / CB 15)</name>
    <name type="common">Caulobacter crescentus</name>
    <dbReference type="NCBI Taxonomy" id="190650"/>
    <lineage>
        <taxon>Bacteria</taxon>
        <taxon>Pseudomonadati</taxon>
        <taxon>Pseudomonadota</taxon>
        <taxon>Alphaproteobacteria</taxon>
        <taxon>Caulobacterales</taxon>
        <taxon>Caulobacteraceae</taxon>
        <taxon>Caulobacter</taxon>
    </lineage>
</organism>
<reference key="1">
    <citation type="journal article" date="2001" name="Proc. Natl. Acad. Sci. U.S.A.">
        <title>Complete genome sequence of Caulobacter crescentus.</title>
        <authorList>
            <person name="Nierman W.C."/>
            <person name="Feldblyum T.V."/>
            <person name="Laub M.T."/>
            <person name="Paulsen I.T."/>
            <person name="Nelson K.E."/>
            <person name="Eisen J.A."/>
            <person name="Heidelberg J.F."/>
            <person name="Alley M.R.K."/>
            <person name="Ohta N."/>
            <person name="Maddock J.R."/>
            <person name="Potocka I."/>
            <person name="Nelson W.C."/>
            <person name="Newton A."/>
            <person name="Stephens C."/>
            <person name="Phadke N.D."/>
            <person name="Ely B."/>
            <person name="DeBoy R.T."/>
            <person name="Dodson R.J."/>
            <person name="Durkin A.S."/>
            <person name="Gwinn M.L."/>
            <person name="Haft D.H."/>
            <person name="Kolonay J.F."/>
            <person name="Smit J."/>
            <person name="Craven M.B."/>
            <person name="Khouri H.M."/>
            <person name="Shetty J."/>
            <person name="Berry K.J."/>
            <person name="Utterback T.R."/>
            <person name="Tran K."/>
            <person name="Wolf A.M."/>
            <person name="Vamathevan J.J."/>
            <person name="Ermolaeva M.D."/>
            <person name="White O."/>
            <person name="Salzberg S.L."/>
            <person name="Venter J.C."/>
            <person name="Shapiro L."/>
            <person name="Fraser C.M."/>
        </authorList>
    </citation>
    <scope>NUCLEOTIDE SEQUENCE [LARGE SCALE GENOMIC DNA]</scope>
    <source>
        <strain>ATCC 19089 / CIP 103742 / CB 15</strain>
    </source>
</reference>
<proteinExistence type="inferred from homology"/>
<sequence>MLLPQPLIHGRLVSRYKRFFADLVLDDGQEITAHCPNPGAMLGVKDAGQGAWVSWSDDPKRKLAYTLQMVEQGNALVGINTLLPNKLVAEALAADALPELSGYATIKPEVKYAEASRVDFLLTHPDRPPCWLEVKNCHFSRTPGLAEFPDCKAQRSTRHLEDLSAQVREGHRAVVLFVVQREDCETFSACAELDPAFAAGLEAAAKAGVEVLVYACEMGTQAVRIARRILWSHAHLTAI</sequence>
<feature type="chain" id="PRO_0000152276" description="Sugar fermentation stimulation protein homolog">
    <location>
        <begin position="1"/>
        <end position="239"/>
    </location>
</feature>
<comment type="similarity">
    <text evidence="1">Belongs to the SfsA family.</text>
</comment>
<name>SFSA_CAUVC</name>
<accession>Q9A4Z6</accession>